<accession>D3RNN7</accession>
<sequence>MTQLALVIDLNVCVGCHACVTSCKEWNTSGWAGPLVDQNPYEGSPTGTFFNRVQTFEIGTFPNTETVHFPKSCLHCEEPPCVPVCPTGASYKRPDNGVVLVDYDKCIGCKYCSWACPYGARELDAQQKVMKKCTLCIDRITDAKLSERDRKPSCVLACPANARLFGDVHDPDSEVSIAIRERGGYQLMPEWGTKPANHYLPRRKTRMHIDPEELTRVDNPWRKEDLTDYTGEETLDDVAW</sequence>
<name>SOEB_ALLVD</name>
<gene>
    <name evidence="3" type="primary">soeB</name>
    <name evidence="6" type="ordered locus">Alvin_2490</name>
</gene>
<feature type="chain" id="PRO_0000446047" description="Sulfite dehydrogenase subunit B">
    <location>
        <begin position="1"/>
        <end position="240"/>
    </location>
</feature>
<feature type="domain" description="4Fe-4S ferredoxin-type 1" evidence="1">
    <location>
        <begin position="4"/>
        <end position="34"/>
    </location>
</feature>
<feature type="domain" description="4Fe-4S ferredoxin-type 2" evidence="1">
    <location>
        <begin position="64"/>
        <end position="95"/>
    </location>
</feature>
<feature type="domain" description="4Fe-4S ferredoxin-type 3" evidence="1">
    <location>
        <begin position="97"/>
        <end position="126"/>
    </location>
</feature>
<feature type="binding site" evidence="1">
    <location>
        <position position="13"/>
    </location>
    <ligand>
        <name>[4Fe-4S] cluster</name>
        <dbReference type="ChEBI" id="CHEBI:49883"/>
    </ligand>
</feature>
<feature type="binding site" evidence="1">
    <location>
        <position position="16"/>
    </location>
    <ligand>
        <name>[4Fe-4S] cluster</name>
        <dbReference type="ChEBI" id="CHEBI:49883"/>
    </ligand>
</feature>
<feature type="binding site" evidence="1">
    <location>
        <position position="19"/>
    </location>
    <ligand>
        <name>[4Fe-4S] cluster</name>
        <dbReference type="ChEBI" id="CHEBI:49883"/>
    </ligand>
</feature>
<feature type="binding site" evidence="1">
    <location>
        <position position="23"/>
    </location>
    <ligand>
        <name>[4Fe-4S] cluster</name>
        <dbReference type="ChEBI" id="CHEBI:49883"/>
    </ligand>
</feature>
<feature type="binding site" evidence="1">
    <location>
        <position position="73"/>
    </location>
    <ligand>
        <name>[4Fe-4S] cluster</name>
        <dbReference type="ChEBI" id="CHEBI:49883"/>
    </ligand>
</feature>
<feature type="binding site" evidence="1">
    <location>
        <position position="76"/>
    </location>
    <ligand>
        <name>[4Fe-4S] cluster</name>
        <dbReference type="ChEBI" id="CHEBI:49883"/>
    </ligand>
</feature>
<feature type="binding site" evidence="1">
    <location>
        <position position="81"/>
    </location>
    <ligand>
        <name>[4Fe-4S] cluster</name>
        <dbReference type="ChEBI" id="CHEBI:49883"/>
    </ligand>
</feature>
<feature type="binding site" evidence="1">
    <location>
        <position position="85"/>
    </location>
    <ligand>
        <name>[4Fe-4S] cluster</name>
        <dbReference type="ChEBI" id="CHEBI:49883"/>
    </ligand>
</feature>
<feature type="binding site" evidence="1">
    <location>
        <position position="106"/>
    </location>
    <ligand>
        <name>[4Fe-4S] cluster</name>
        <dbReference type="ChEBI" id="CHEBI:49883"/>
    </ligand>
</feature>
<feature type="binding site" evidence="1">
    <location>
        <position position="109"/>
    </location>
    <ligand>
        <name>[4Fe-4S] cluster</name>
        <dbReference type="ChEBI" id="CHEBI:49883"/>
    </ligand>
</feature>
<feature type="binding site" evidence="1">
    <location>
        <position position="112"/>
    </location>
    <ligand>
        <name>[4Fe-4S] cluster</name>
        <dbReference type="ChEBI" id="CHEBI:49883"/>
    </ligand>
</feature>
<feature type="binding site" evidence="1">
    <location>
        <position position="116"/>
    </location>
    <ligand>
        <name>[4Fe-4S] cluster</name>
        <dbReference type="ChEBI" id="CHEBI:49883"/>
    </ligand>
</feature>
<reference key="1">
    <citation type="journal article" date="2011" name="Stand. Genomic Sci.">
        <title>Complete genome sequence of Allochromatium vinosum DSM 180(T).</title>
        <authorList>
            <person name="Weissgerber T."/>
            <person name="Zigann R."/>
            <person name="Bruce D."/>
            <person name="Chang Y.J."/>
            <person name="Detter J.C."/>
            <person name="Han C."/>
            <person name="Hauser L."/>
            <person name="Jeffries C.D."/>
            <person name="Land M."/>
            <person name="Munk A.C."/>
            <person name="Tapia R."/>
            <person name="Dahl C."/>
        </authorList>
    </citation>
    <scope>NUCLEOTIDE SEQUENCE [LARGE SCALE GENOMIC DNA]</scope>
    <source>
        <strain>ATCC 17899 / DSM 180 / NBRC 103801 / NCIMB 10441 / D</strain>
    </source>
</reference>
<reference key="2">
    <citation type="journal article" date="2013" name="Microbiology">
        <title>Sulfite oxidation in the purple sulfur bacterium Allochromatium vinosum: identification of SoeABC as a major player and relevance of SoxYZ in the process.</title>
        <authorList>
            <person name="Dahl C."/>
            <person name="Franz B."/>
            <person name="Hensen D."/>
            <person name="Kesselheim A."/>
            <person name="Zigann R."/>
        </authorList>
    </citation>
    <scope>FUNCTION</scope>
    <scope>SUBUNIT</scope>
    <scope>SUBCELLULAR LOCATION</scope>
    <source>
        <strain>ATCC 17899 / DSM 180 / NBRC 103801 / NCIMB 10441 / D</strain>
    </source>
</reference>
<dbReference type="EMBL" id="CP001896">
    <property type="protein sequence ID" value="ADC63402.1"/>
    <property type="molecule type" value="Genomic_DNA"/>
</dbReference>
<dbReference type="RefSeq" id="WP_012971672.1">
    <property type="nucleotide sequence ID" value="NC_013851.1"/>
</dbReference>
<dbReference type="SMR" id="D3RNN7"/>
<dbReference type="STRING" id="572477.Alvin_2490"/>
<dbReference type="KEGG" id="alv:Alvin_2490"/>
<dbReference type="eggNOG" id="COG0437">
    <property type="taxonomic scope" value="Bacteria"/>
</dbReference>
<dbReference type="HOGENOM" id="CLU_043374_1_1_6"/>
<dbReference type="OrthoDB" id="9779457at2"/>
<dbReference type="BioCyc" id="MetaCyc:MONOMER-18522"/>
<dbReference type="BRENDA" id="1.8.5.6">
    <property type="organism ID" value="257"/>
</dbReference>
<dbReference type="Proteomes" id="UP000001441">
    <property type="component" value="Chromosome"/>
</dbReference>
<dbReference type="GO" id="GO:0005886">
    <property type="term" value="C:plasma membrane"/>
    <property type="evidence" value="ECO:0007669"/>
    <property type="project" value="UniProtKB-SubCell"/>
</dbReference>
<dbReference type="GO" id="GO:0051539">
    <property type="term" value="F:4 iron, 4 sulfur cluster binding"/>
    <property type="evidence" value="ECO:0007669"/>
    <property type="project" value="UniProtKB-KW"/>
</dbReference>
<dbReference type="GO" id="GO:0046872">
    <property type="term" value="F:metal ion binding"/>
    <property type="evidence" value="ECO:0007669"/>
    <property type="project" value="UniProtKB-KW"/>
</dbReference>
<dbReference type="CDD" id="cd10551">
    <property type="entry name" value="PsrB"/>
    <property type="match status" value="1"/>
</dbReference>
<dbReference type="Gene3D" id="3.30.70.20">
    <property type="match status" value="2"/>
</dbReference>
<dbReference type="InterPro" id="IPR017896">
    <property type="entry name" value="4Fe4S_Fe-S-bd"/>
</dbReference>
<dbReference type="InterPro" id="IPR017900">
    <property type="entry name" value="4Fe4S_Fe_S_CS"/>
</dbReference>
<dbReference type="InterPro" id="IPR050954">
    <property type="entry name" value="ET_IronSulfur_Cluster-Binding"/>
</dbReference>
<dbReference type="PANTHER" id="PTHR43177">
    <property type="entry name" value="PROTEIN NRFC"/>
    <property type="match status" value="1"/>
</dbReference>
<dbReference type="PANTHER" id="PTHR43177:SF3">
    <property type="entry name" value="PROTEIN NRFC HOMOLOG"/>
    <property type="match status" value="1"/>
</dbReference>
<dbReference type="Pfam" id="PF13247">
    <property type="entry name" value="Fer4_11"/>
    <property type="match status" value="1"/>
</dbReference>
<dbReference type="SUPFAM" id="SSF54862">
    <property type="entry name" value="4Fe-4S ferredoxins"/>
    <property type="match status" value="1"/>
</dbReference>
<dbReference type="PROSITE" id="PS00198">
    <property type="entry name" value="4FE4S_FER_1"/>
    <property type="match status" value="1"/>
</dbReference>
<dbReference type="PROSITE" id="PS51379">
    <property type="entry name" value="4FE4S_FER_2"/>
    <property type="match status" value="3"/>
</dbReference>
<proteinExistence type="evidence at protein level"/>
<protein>
    <recommendedName>
        <fullName evidence="4">Sulfite dehydrogenase subunit B</fullName>
    </recommendedName>
    <alternativeName>
        <fullName evidence="4">Sulfite dehydrogenase iron-sulfur subunit</fullName>
    </alternativeName>
    <alternativeName>
        <fullName evidence="4">Sulfite-oxidizing enzyme subunit B</fullName>
    </alternativeName>
</protein>
<organism>
    <name type="scientific">Allochromatium vinosum (strain ATCC 17899 / DSM 180 / NBRC 103801 / NCIMB 10441 / D)</name>
    <name type="common">Chromatium vinosum</name>
    <dbReference type="NCBI Taxonomy" id="572477"/>
    <lineage>
        <taxon>Bacteria</taxon>
        <taxon>Pseudomonadati</taxon>
        <taxon>Pseudomonadota</taxon>
        <taxon>Gammaproteobacteria</taxon>
        <taxon>Chromatiales</taxon>
        <taxon>Chromatiaceae</taxon>
        <taxon>Allochromatium</taxon>
    </lineage>
</organism>
<comment type="function">
    <text evidence="2">Part of the SoeABC complex that catalyzes the oxidation of sulfite to sulfate. SoeB is probably the electron transfer subunit.</text>
</comment>
<comment type="cofactor">
    <cofactor evidence="1">
        <name>[4Fe-4S] cluster</name>
        <dbReference type="ChEBI" id="CHEBI:49883"/>
    </cofactor>
    <text evidence="1">Binds 3 [4Fe-4S] clusters.</text>
</comment>
<comment type="subunit">
    <text evidence="5">Forms a heterotrimeric membrane-bound complex composed of a catalytic heterodimer (SoeAB) and a membrane anchor protein (SoeC).</text>
</comment>
<comment type="subcellular location">
    <subcellularLocation>
        <location evidence="5">Cell inner membrane</location>
        <topology evidence="5">Peripheral membrane protein</topology>
        <orientation evidence="5">Cytoplasmic side</orientation>
    </subcellularLocation>
    <text evidence="5">Attached to the membrane by interaction with SoeC.</text>
</comment>
<keyword id="KW-0004">4Fe-4S</keyword>
<keyword id="KW-0997">Cell inner membrane</keyword>
<keyword id="KW-1003">Cell membrane</keyword>
<keyword id="KW-0249">Electron transport</keyword>
<keyword id="KW-0408">Iron</keyword>
<keyword id="KW-0411">Iron-sulfur</keyword>
<keyword id="KW-0472">Membrane</keyword>
<keyword id="KW-0479">Metal-binding</keyword>
<keyword id="KW-1185">Reference proteome</keyword>
<keyword id="KW-0677">Repeat</keyword>
<keyword id="KW-0813">Transport</keyword>
<evidence type="ECO:0000255" key="1">
    <source>
        <dbReference type="PROSITE-ProRule" id="PRU00711"/>
    </source>
</evidence>
<evidence type="ECO:0000269" key="2">
    <source>
    </source>
</evidence>
<evidence type="ECO:0000303" key="3">
    <source>
    </source>
</evidence>
<evidence type="ECO:0000305" key="4"/>
<evidence type="ECO:0000305" key="5">
    <source>
    </source>
</evidence>
<evidence type="ECO:0000312" key="6">
    <source>
        <dbReference type="EMBL" id="ADC63402.1"/>
    </source>
</evidence>